<feature type="chain" id="PRO_1000018750" description="Phosphoribosylaminoimidazole-succinocarboxamide synthase">
    <location>
        <begin position="1"/>
        <end position="260"/>
    </location>
</feature>
<sequence length="260" mass="29735">MKKGKKLYEGKAKIIYATSDKNLVIQYFKDDATAFNNLKKSTIEGKGVLNNRISEHILSNLTQIGIKNHLVKRLNMREQIIKLVEIIPIEFIVRNVATGSITKRLGIEDGTVLKQPLLEYCLKDDKLGDPLIAEEHILAFDWATKSELEKVKKMILRINDFMIGMFRGVGIKLIDFKLEFGRLKENGKNEVILADEISPDTCRLWDSITDKKLDKDRFRKDLGDLIPAYTEVAKRLGILHEQSNLSAVNVTKLRSVKKRK</sequence>
<reference key="1">
    <citation type="journal article" date="2005" name="Science">
        <title>Genome streamlining in a cosmopolitan oceanic bacterium.</title>
        <authorList>
            <person name="Giovannoni S.J."/>
            <person name="Tripp H.J."/>
            <person name="Givan S."/>
            <person name="Podar M."/>
            <person name="Vergin K.L."/>
            <person name="Baptista D."/>
            <person name="Bibbs L."/>
            <person name="Eads J."/>
            <person name="Richardson T.H."/>
            <person name="Noordewier M."/>
            <person name="Rappe M.S."/>
            <person name="Short J.M."/>
            <person name="Carrington J.C."/>
            <person name="Mathur E.J."/>
        </authorList>
    </citation>
    <scope>NUCLEOTIDE SEQUENCE [LARGE SCALE GENOMIC DNA]</scope>
    <source>
        <strain>HTCC1062</strain>
    </source>
</reference>
<protein>
    <recommendedName>
        <fullName evidence="1">Phosphoribosylaminoimidazole-succinocarboxamide synthase</fullName>
        <ecNumber evidence="1">6.3.2.6</ecNumber>
    </recommendedName>
    <alternativeName>
        <fullName evidence="1">SAICAR synthetase</fullName>
    </alternativeName>
</protein>
<proteinExistence type="inferred from homology"/>
<keyword id="KW-0067">ATP-binding</keyword>
<keyword id="KW-0436">Ligase</keyword>
<keyword id="KW-0547">Nucleotide-binding</keyword>
<keyword id="KW-0658">Purine biosynthesis</keyword>
<keyword id="KW-1185">Reference proteome</keyword>
<dbReference type="EC" id="6.3.2.6" evidence="1"/>
<dbReference type="EMBL" id="CP000084">
    <property type="protein sequence ID" value="AAZ21941.1"/>
    <property type="molecule type" value="Genomic_DNA"/>
</dbReference>
<dbReference type="RefSeq" id="WP_006996790.1">
    <property type="nucleotide sequence ID" value="NC_007205.1"/>
</dbReference>
<dbReference type="SMR" id="Q4FLJ7"/>
<dbReference type="STRING" id="335992.SAR11_1138"/>
<dbReference type="GeneID" id="66295632"/>
<dbReference type="KEGG" id="pub:SAR11_1138"/>
<dbReference type="eggNOG" id="COG0152">
    <property type="taxonomic scope" value="Bacteria"/>
</dbReference>
<dbReference type="HOGENOM" id="CLU_061495_2_0_5"/>
<dbReference type="OrthoDB" id="9801549at2"/>
<dbReference type="UniPathway" id="UPA00074">
    <property type="reaction ID" value="UER00131"/>
</dbReference>
<dbReference type="Proteomes" id="UP000002528">
    <property type="component" value="Chromosome"/>
</dbReference>
<dbReference type="GO" id="GO:0005829">
    <property type="term" value="C:cytosol"/>
    <property type="evidence" value="ECO:0007669"/>
    <property type="project" value="TreeGrafter"/>
</dbReference>
<dbReference type="GO" id="GO:0005524">
    <property type="term" value="F:ATP binding"/>
    <property type="evidence" value="ECO:0007669"/>
    <property type="project" value="UniProtKB-KW"/>
</dbReference>
<dbReference type="GO" id="GO:0004639">
    <property type="term" value="F:phosphoribosylaminoimidazolesuccinocarboxamide synthase activity"/>
    <property type="evidence" value="ECO:0007669"/>
    <property type="project" value="UniProtKB-UniRule"/>
</dbReference>
<dbReference type="GO" id="GO:0006189">
    <property type="term" value="P:'de novo' IMP biosynthetic process"/>
    <property type="evidence" value="ECO:0007669"/>
    <property type="project" value="UniProtKB-UniRule"/>
</dbReference>
<dbReference type="GO" id="GO:0009236">
    <property type="term" value="P:cobalamin biosynthetic process"/>
    <property type="evidence" value="ECO:0007669"/>
    <property type="project" value="InterPro"/>
</dbReference>
<dbReference type="CDD" id="cd01415">
    <property type="entry name" value="SAICAR_synt_PurC"/>
    <property type="match status" value="1"/>
</dbReference>
<dbReference type="FunFam" id="3.30.470.20:FF:000006">
    <property type="entry name" value="Phosphoribosylaminoimidazole-succinocarboxamide synthase"/>
    <property type="match status" value="1"/>
</dbReference>
<dbReference type="Gene3D" id="3.30.470.20">
    <property type="entry name" value="ATP-grasp fold, B domain"/>
    <property type="match status" value="1"/>
</dbReference>
<dbReference type="Gene3D" id="3.30.200.20">
    <property type="entry name" value="Phosphorylase Kinase, domain 1"/>
    <property type="match status" value="1"/>
</dbReference>
<dbReference type="HAMAP" id="MF_00137">
    <property type="entry name" value="SAICAR_synth"/>
    <property type="match status" value="1"/>
</dbReference>
<dbReference type="InterPro" id="IPR028923">
    <property type="entry name" value="SAICAR_synt/ADE2_N"/>
</dbReference>
<dbReference type="InterPro" id="IPR033934">
    <property type="entry name" value="SAICAR_synt_PurC"/>
</dbReference>
<dbReference type="InterPro" id="IPR001636">
    <property type="entry name" value="SAICAR_synth"/>
</dbReference>
<dbReference type="InterPro" id="IPR050089">
    <property type="entry name" value="SAICAR_synthetase"/>
</dbReference>
<dbReference type="InterPro" id="IPR018236">
    <property type="entry name" value="SAICAR_synthetase_CS"/>
</dbReference>
<dbReference type="NCBIfam" id="TIGR00081">
    <property type="entry name" value="purC"/>
    <property type="match status" value="1"/>
</dbReference>
<dbReference type="PANTHER" id="PTHR43599">
    <property type="entry name" value="MULTIFUNCTIONAL PROTEIN ADE2"/>
    <property type="match status" value="1"/>
</dbReference>
<dbReference type="PANTHER" id="PTHR43599:SF3">
    <property type="entry name" value="SI:DKEY-6E2.2"/>
    <property type="match status" value="1"/>
</dbReference>
<dbReference type="Pfam" id="PF01259">
    <property type="entry name" value="SAICAR_synt"/>
    <property type="match status" value="1"/>
</dbReference>
<dbReference type="SUPFAM" id="SSF56104">
    <property type="entry name" value="SAICAR synthase-like"/>
    <property type="match status" value="1"/>
</dbReference>
<dbReference type="PROSITE" id="PS01057">
    <property type="entry name" value="SAICAR_SYNTHETASE_1"/>
    <property type="match status" value="1"/>
</dbReference>
<dbReference type="PROSITE" id="PS01058">
    <property type="entry name" value="SAICAR_SYNTHETASE_2"/>
    <property type="match status" value="1"/>
</dbReference>
<evidence type="ECO:0000255" key="1">
    <source>
        <dbReference type="HAMAP-Rule" id="MF_00137"/>
    </source>
</evidence>
<organism>
    <name type="scientific">Pelagibacter ubique (strain HTCC1062)</name>
    <dbReference type="NCBI Taxonomy" id="335992"/>
    <lineage>
        <taxon>Bacteria</taxon>
        <taxon>Pseudomonadati</taxon>
        <taxon>Pseudomonadota</taxon>
        <taxon>Alphaproteobacteria</taxon>
        <taxon>Candidatus Pelagibacterales</taxon>
        <taxon>Candidatus Pelagibacteraceae</taxon>
        <taxon>Candidatus Pelagibacter</taxon>
    </lineage>
</organism>
<accession>Q4FLJ7</accession>
<name>PUR7_PELUB</name>
<comment type="catalytic activity">
    <reaction evidence="1">
        <text>5-amino-1-(5-phospho-D-ribosyl)imidazole-4-carboxylate + L-aspartate + ATP = (2S)-2-[5-amino-1-(5-phospho-beta-D-ribosyl)imidazole-4-carboxamido]succinate + ADP + phosphate + 2 H(+)</text>
        <dbReference type="Rhea" id="RHEA:22628"/>
        <dbReference type="ChEBI" id="CHEBI:15378"/>
        <dbReference type="ChEBI" id="CHEBI:29991"/>
        <dbReference type="ChEBI" id="CHEBI:30616"/>
        <dbReference type="ChEBI" id="CHEBI:43474"/>
        <dbReference type="ChEBI" id="CHEBI:58443"/>
        <dbReference type="ChEBI" id="CHEBI:77657"/>
        <dbReference type="ChEBI" id="CHEBI:456216"/>
        <dbReference type="EC" id="6.3.2.6"/>
    </reaction>
</comment>
<comment type="pathway">
    <text evidence="1">Purine metabolism; IMP biosynthesis via de novo pathway; 5-amino-1-(5-phospho-D-ribosyl)imidazole-4-carboxamide from 5-amino-1-(5-phospho-D-ribosyl)imidazole-4-carboxylate: step 1/2.</text>
</comment>
<comment type="similarity">
    <text evidence="1">Belongs to the SAICAR synthetase family.</text>
</comment>
<gene>
    <name evidence="1" type="primary">purC</name>
    <name type="ordered locus">SAR11_1138</name>
</gene>